<name>TXB1B_SCODE</name>
<evidence type="ECO:0000255" key="1"/>
<evidence type="ECO:0000269" key="2">
    <source>
    </source>
</evidence>
<evidence type="ECO:0000303" key="3">
    <source>
    </source>
</evidence>
<evidence type="ECO:0000305" key="4"/>
<evidence type="ECO:0000305" key="5">
    <source>
    </source>
</evidence>
<protein>
    <recommendedName>
        <fullName evidence="4">Kappa-scoloptoxin(11)-Ssd1b</fullName>
        <shortName evidence="4">Kappa-SLPTX(11)-Ssd1b</shortName>
    </recommendedName>
    <alternativeName>
        <fullName evidence="3">Toxin SSD282</fullName>
    </alternativeName>
</protein>
<keyword id="KW-0165">Cleavage on pair of basic residues</keyword>
<keyword id="KW-0903">Direct protein sequencing</keyword>
<keyword id="KW-1015">Disulfide bond</keyword>
<keyword id="KW-0872">Ion channel impairing toxin</keyword>
<keyword id="KW-0632">Potassium channel impairing toxin</keyword>
<keyword id="KW-0964">Secreted</keyword>
<keyword id="KW-0732">Signal</keyword>
<keyword id="KW-0800">Toxin</keyword>
<keyword id="KW-1220">Voltage-gated potassium channel impairing toxin</keyword>
<feature type="signal peptide" evidence="1">
    <location>
        <begin position="1"/>
        <end position="16"/>
    </location>
</feature>
<feature type="propeptide" id="PRO_0000446764" evidence="5">
    <location>
        <begin position="17"/>
        <end position="25"/>
    </location>
</feature>
<feature type="chain" id="PRO_0000446765" description="Kappa-scoloptoxin(11)-Ssd1b" evidence="5">
    <location>
        <begin position="26"/>
        <end position="218"/>
    </location>
</feature>
<comment type="function">
    <text evidence="5">Voltage-gated potassium channel inhibitor.</text>
</comment>
<comment type="subcellular location">
    <subcellularLocation>
        <location evidence="2">Secreted</location>
    </subcellularLocation>
</comment>
<comment type="tissue specificity">
    <text evidence="5">Expressed by the venom gland.</text>
</comment>
<comment type="PTM">
    <text evidence="4">Contains 8 disulfide bonds.</text>
</comment>
<comment type="mass spectrometry"/>
<comment type="similarity">
    <text evidence="4">Belongs to the scoloptoxin-11 family.</text>
</comment>
<sequence>MFYSHLLFFTFTFACSSSLNRKTKREMDLKDIILDTCHQNAACAHIQMHLKETYVDELCKCGRGEECPIHWDPNDGHSITQAYNQWKFCSPISQDLPVCTREQTAREFSYEMNPVSKKVQMFMFFNCLCPENHFYEFFNEREETGGGQLAIIEERCEKVKQCEKTQICQKIETFQGKFLFKHVKCFCPGNQNCNDDLKKADATNVGDDGSVQHYMKCH</sequence>
<dbReference type="EMBL" id="KC144287">
    <property type="status" value="NOT_ANNOTATED_CDS"/>
    <property type="molecule type" value="mRNA"/>
</dbReference>
<dbReference type="SMR" id="P0DQA4"/>
<dbReference type="GO" id="GO:0005576">
    <property type="term" value="C:extracellular region"/>
    <property type="evidence" value="ECO:0007669"/>
    <property type="project" value="UniProtKB-SubCell"/>
</dbReference>
<dbReference type="GO" id="GO:0015459">
    <property type="term" value="F:potassium channel regulator activity"/>
    <property type="evidence" value="ECO:0007669"/>
    <property type="project" value="UniProtKB-KW"/>
</dbReference>
<dbReference type="GO" id="GO:0090729">
    <property type="term" value="F:toxin activity"/>
    <property type="evidence" value="ECO:0007669"/>
    <property type="project" value="UniProtKB-KW"/>
</dbReference>
<dbReference type="Gene3D" id="2.20.20.160">
    <property type="match status" value="2"/>
</dbReference>
<reference key="1">
    <citation type="journal article" date="2012" name="J. Proteome Res.">
        <title>Venomic and transcriptomic analysis of centipede Scolopendra subspinipes dehaani.</title>
        <authorList>
            <person name="Liu Z.C."/>
            <person name="Zhang R."/>
            <person name="Zhao F."/>
            <person name="Chen Z.M."/>
            <person name="Liu H.W."/>
            <person name="Wang Y.J."/>
            <person name="Jiang P."/>
            <person name="Zhang Y."/>
            <person name="Wu Y."/>
            <person name="Ding J.P."/>
            <person name="Lee W.H."/>
            <person name="Zhang Y."/>
        </authorList>
    </citation>
    <scope>NUCLEOTIDE SEQUENCE [MRNA]</scope>
    <scope>PROTEIN SEQUENCE OF 26-48</scope>
    <scope>SUBCELLULAR LOCATION</scope>
    <scope>MASS SPECTROMETRY</scope>
    <scope>FUNCTION</scope>
    <source>
        <tissue>Venom</tissue>
        <tissue>Venom gland</tissue>
    </source>
</reference>
<proteinExistence type="evidence at protein level"/>
<organism>
    <name type="scientific">Scolopendra dehaani</name>
    <name type="common">Thai centipede</name>
    <name type="synonym">Scolopendra subspinipes dehaani</name>
    <dbReference type="NCBI Taxonomy" id="2609776"/>
    <lineage>
        <taxon>Eukaryota</taxon>
        <taxon>Metazoa</taxon>
        <taxon>Ecdysozoa</taxon>
        <taxon>Arthropoda</taxon>
        <taxon>Myriapoda</taxon>
        <taxon>Chilopoda</taxon>
        <taxon>Pleurostigmophora</taxon>
        <taxon>Scolopendromorpha</taxon>
        <taxon>Scolopendridae</taxon>
        <taxon>Scolopendra</taxon>
    </lineage>
</organism>
<accession>P0DQA4</accession>